<sequence>MFHNTFQSGLLSVLYSIGSKPLQIWDTQIKNGHVKRITDEEIQSLVLEIMGNNISTAFISCPVDPEKTLGIKLPFFVMVVKNMNKYFSFEVQIIDDKKIKRRFRASNYQSATRVKPFICTMPMRMDEGWNQIQFNLSDFVKRAYGTNYVETLRIQIHANCRIRRVYFADRLYTEDELPAEFKLYLPIRGQLSTQSPAFAMTSE</sequence>
<proteinExistence type="inferred from homology"/>
<feature type="chain" id="PRO_0000296405" description="Cilia- and flagella-associated protein 20">
    <location>
        <begin position="1"/>
        <end position="203"/>
    </location>
</feature>
<gene>
    <name type="ORF">CBG09753</name>
</gene>
<evidence type="ECO:0000250" key="1">
    <source>
        <dbReference type="UniProtKB" id="Q6B857"/>
    </source>
</evidence>
<evidence type="ECO:0000250" key="2">
    <source>
        <dbReference type="UniProtKB" id="Q9Y6A4"/>
    </source>
</evidence>
<evidence type="ECO:0000305" key="3"/>
<accession>Q61JK7</accession>
<accession>A8X9J9</accession>
<comment type="function">
    <text evidence="2">Cilium- and flagellum-specific protein that plays a role in axonemal structure organization and motility. Microtubule inner protein (MIP) part of the dynein-decorated doublet microtubules (DMTs) in cilia axoneme, which is required for motile cilia beating. Involved in the regulation of the size and morphology of cilia. Required for axonemal microtubules polyglutamylation.</text>
</comment>
<comment type="subcellular location">
    <subcellularLocation>
        <location evidence="2">Nucleus</location>
    </subcellularLocation>
    <subcellularLocation>
        <location evidence="2">Cytoplasm</location>
        <location evidence="2">Cytoskeleton</location>
        <location evidence="2">Microtubule organizing center</location>
        <location evidence="2">Centrosome</location>
        <location evidence="2">Centriole</location>
    </subcellularLocation>
    <subcellularLocation>
        <location evidence="2">Cytoplasm</location>
        <location evidence="2">Cytoskeleton</location>
        <location evidence="2">Cilium basal body</location>
    </subcellularLocation>
    <subcellularLocation>
        <location evidence="1">Cytoplasm</location>
        <location evidence="1">Cytoskeleton</location>
        <location evidence="1">Cilium axoneme</location>
    </subcellularLocation>
</comment>
<comment type="similarity">
    <text evidence="3">Belongs to the CFAP20 family.</text>
</comment>
<name>CFA20_CAEBR</name>
<keyword id="KW-0966">Cell projection</keyword>
<keyword id="KW-0969">Cilium</keyword>
<keyword id="KW-0963">Cytoplasm</keyword>
<keyword id="KW-0206">Cytoskeleton</keyword>
<keyword id="KW-0493">Microtubule</keyword>
<keyword id="KW-0539">Nucleus</keyword>
<keyword id="KW-1185">Reference proteome</keyword>
<reference key="1">
    <citation type="journal article" date="2003" name="PLoS Biol.">
        <title>The genome sequence of Caenorhabditis briggsae: a platform for comparative genomics.</title>
        <authorList>
            <person name="Stein L.D."/>
            <person name="Bao Z."/>
            <person name="Blasiar D."/>
            <person name="Blumenthal T."/>
            <person name="Brent M.R."/>
            <person name="Chen N."/>
            <person name="Chinwalla A."/>
            <person name="Clarke L."/>
            <person name="Clee C."/>
            <person name="Coghlan A."/>
            <person name="Coulson A."/>
            <person name="D'Eustachio P."/>
            <person name="Fitch D.H.A."/>
            <person name="Fulton L.A."/>
            <person name="Fulton R.E."/>
            <person name="Griffiths-Jones S."/>
            <person name="Harris T.W."/>
            <person name="Hillier L.W."/>
            <person name="Kamath R."/>
            <person name="Kuwabara P.E."/>
            <person name="Mardis E.R."/>
            <person name="Marra M.A."/>
            <person name="Miner T.L."/>
            <person name="Minx P."/>
            <person name="Mullikin J.C."/>
            <person name="Plumb R.W."/>
            <person name="Rogers J."/>
            <person name="Schein J.E."/>
            <person name="Sohrmann M."/>
            <person name="Spieth J."/>
            <person name="Stajich J.E."/>
            <person name="Wei C."/>
            <person name="Willey D."/>
            <person name="Wilson R.K."/>
            <person name="Durbin R.M."/>
            <person name="Waterston R.H."/>
        </authorList>
    </citation>
    <scope>NUCLEOTIDE SEQUENCE [LARGE SCALE GENOMIC DNA]</scope>
    <source>
        <strain>AF16</strain>
    </source>
</reference>
<dbReference type="EMBL" id="HE601459">
    <property type="protein sequence ID" value="CAP29314.1"/>
    <property type="molecule type" value="Genomic_DNA"/>
</dbReference>
<dbReference type="RefSeq" id="XP_002641468.1">
    <property type="nucleotide sequence ID" value="XM_002641422.1"/>
</dbReference>
<dbReference type="SMR" id="Q61JK7"/>
<dbReference type="FunCoup" id="Q61JK7">
    <property type="interactions" value="1704"/>
</dbReference>
<dbReference type="STRING" id="6238.Q61JK7"/>
<dbReference type="EnsemblMetazoa" id="CBG09753a.1">
    <property type="protein sequence ID" value="CBG09753a.1"/>
    <property type="gene ID" value="WBGene00031282"/>
</dbReference>
<dbReference type="GeneID" id="8583459"/>
<dbReference type="KEGG" id="cbr:CBG_09753"/>
<dbReference type="CTD" id="8583459"/>
<dbReference type="WormBase" id="CBG09753a">
    <property type="protein sequence ID" value="CBP08422"/>
    <property type="gene ID" value="WBGene00031282"/>
</dbReference>
<dbReference type="eggNOG" id="KOG3213">
    <property type="taxonomic scope" value="Eukaryota"/>
</dbReference>
<dbReference type="HOGENOM" id="CLU_060610_1_1_1"/>
<dbReference type="InParanoid" id="Q61JK7"/>
<dbReference type="OMA" id="TTYISCP"/>
<dbReference type="OrthoDB" id="7486196at2759"/>
<dbReference type="Proteomes" id="UP000008549">
    <property type="component" value="Unassembled WGS sequence"/>
</dbReference>
<dbReference type="GO" id="GO:0005879">
    <property type="term" value="C:axonemal microtubule"/>
    <property type="evidence" value="ECO:0000250"/>
    <property type="project" value="UniProtKB"/>
</dbReference>
<dbReference type="GO" id="GO:0005814">
    <property type="term" value="C:centriole"/>
    <property type="evidence" value="ECO:0000250"/>
    <property type="project" value="UniProtKB"/>
</dbReference>
<dbReference type="GO" id="GO:0036064">
    <property type="term" value="C:ciliary basal body"/>
    <property type="evidence" value="ECO:0000250"/>
    <property type="project" value="UniProtKB"/>
</dbReference>
<dbReference type="GO" id="GO:0005929">
    <property type="term" value="C:cilium"/>
    <property type="evidence" value="ECO:0000250"/>
    <property type="project" value="UniProtKB"/>
</dbReference>
<dbReference type="GO" id="GO:0031514">
    <property type="term" value="C:motile cilium"/>
    <property type="evidence" value="ECO:0000318"/>
    <property type="project" value="GO_Central"/>
</dbReference>
<dbReference type="GO" id="GO:0005634">
    <property type="term" value="C:nucleus"/>
    <property type="evidence" value="ECO:0007669"/>
    <property type="project" value="UniProtKB-SubCell"/>
</dbReference>
<dbReference type="GO" id="GO:0060271">
    <property type="term" value="P:cilium assembly"/>
    <property type="evidence" value="ECO:0000318"/>
    <property type="project" value="GO_Central"/>
</dbReference>
<dbReference type="GO" id="GO:2000147">
    <property type="term" value="P:positive regulation of cell motility"/>
    <property type="evidence" value="ECO:0000250"/>
    <property type="project" value="UniProtKB"/>
</dbReference>
<dbReference type="GO" id="GO:2000253">
    <property type="term" value="P:positive regulation of feeding behavior"/>
    <property type="evidence" value="ECO:0000250"/>
    <property type="project" value="UniProtKB"/>
</dbReference>
<dbReference type="GO" id="GO:0060296">
    <property type="term" value="P:regulation of cilium beat frequency involved in ciliary motility"/>
    <property type="evidence" value="ECO:0000250"/>
    <property type="project" value="UniProtKB"/>
</dbReference>
<dbReference type="InterPro" id="IPR040441">
    <property type="entry name" value="CFA20/CFAP20DC"/>
</dbReference>
<dbReference type="InterPro" id="IPR007714">
    <property type="entry name" value="CFA20_dom"/>
</dbReference>
<dbReference type="PANTHER" id="PTHR12458">
    <property type="entry name" value="ORF PROTEIN"/>
    <property type="match status" value="1"/>
</dbReference>
<dbReference type="Pfam" id="PF05018">
    <property type="entry name" value="CFA20_dom"/>
    <property type="match status" value="1"/>
</dbReference>
<protein>
    <recommendedName>
        <fullName>Cilia- and flagella-associated protein 20</fullName>
    </recommendedName>
</protein>
<organism>
    <name type="scientific">Caenorhabditis briggsae</name>
    <dbReference type="NCBI Taxonomy" id="6238"/>
    <lineage>
        <taxon>Eukaryota</taxon>
        <taxon>Metazoa</taxon>
        <taxon>Ecdysozoa</taxon>
        <taxon>Nematoda</taxon>
        <taxon>Chromadorea</taxon>
        <taxon>Rhabditida</taxon>
        <taxon>Rhabditina</taxon>
        <taxon>Rhabditomorpha</taxon>
        <taxon>Rhabditoidea</taxon>
        <taxon>Rhabditidae</taxon>
        <taxon>Peloderinae</taxon>
        <taxon>Caenorhabditis</taxon>
    </lineage>
</organism>